<comment type="function">
    <text evidence="1">Single strand-specific metallo-endoribonuclease involved in late-stage 70S ribosome quality control and in maturation of the 3' terminus of the 16S rRNA.</text>
</comment>
<comment type="cofactor">
    <cofactor evidence="1">
        <name>Zn(2+)</name>
        <dbReference type="ChEBI" id="CHEBI:29105"/>
    </cofactor>
    <text evidence="1">Binds 1 zinc ion.</text>
</comment>
<comment type="subcellular location">
    <subcellularLocation>
        <location evidence="1">Cytoplasm</location>
    </subcellularLocation>
</comment>
<comment type="similarity">
    <text evidence="1">Belongs to the endoribonuclease YbeY family.</text>
</comment>
<reference key="1">
    <citation type="journal article" date="2005" name="Science">
        <title>Genome sequence of the PCE-dechlorinating bacterium Dehalococcoides ethenogenes.</title>
        <authorList>
            <person name="Seshadri R."/>
            <person name="Adrian L."/>
            <person name="Fouts D.E."/>
            <person name="Eisen J.A."/>
            <person name="Phillippy A.M."/>
            <person name="Methe B.A."/>
            <person name="Ward N.L."/>
            <person name="Nelson W.C."/>
            <person name="DeBoy R.T."/>
            <person name="Khouri H.M."/>
            <person name="Kolonay J.F."/>
            <person name="Dodson R.J."/>
            <person name="Daugherty S.C."/>
            <person name="Brinkac L.M."/>
            <person name="Sullivan S.A."/>
            <person name="Madupu R."/>
            <person name="Nelson K.E."/>
            <person name="Kang K.H."/>
            <person name="Impraim M."/>
            <person name="Tran K."/>
            <person name="Robinson J.M."/>
            <person name="Forberger H.A."/>
            <person name="Fraser C.M."/>
            <person name="Zinder S.H."/>
            <person name="Heidelberg J.F."/>
        </authorList>
    </citation>
    <scope>NUCLEOTIDE SEQUENCE [LARGE SCALE GENOMIC DNA]</scope>
    <source>
        <strain>ATCC BAA-2266 / KCTC 15142 / 195</strain>
    </source>
</reference>
<sequence>MPPFRAVILFRHMEINVIVKPPFKKLVSTPFLKKIASKTLKAQAADPNSELGIVITGQEEIKDLNLKYRGLDEPTDVLSFYMLEENPENLTAADDFPTPPDENIHLGEVIISYPQAELQATAASHSVSHEIAFLLIHGVLHLLGYDHHEVVAEAVMKSHQDIAMKHIREILE</sequence>
<accession>Q3Z6R8</accession>
<keyword id="KW-0963">Cytoplasm</keyword>
<keyword id="KW-0255">Endonuclease</keyword>
<keyword id="KW-0378">Hydrolase</keyword>
<keyword id="KW-0479">Metal-binding</keyword>
<keyword id="KW-0540">Nuclease</keyword>
<keyword id="KW-0690">Ribosome biogenesis</keyword>
<keyword id="KW-0698">rRNA processing</keyword>
<keyword id="KW-0862">Zinc</keyword>
<name>YBEY_DEHM1</name>
<feature type="chain" id="PRO_0000284196" description="Endoribonuclease YbeY">
    <location>
        <begin position="1"/>
        <end position="172"/>
    </location>
</feature>
<feature type="binding site" evidence="1">
    <location>
        <position position="137"/>
    </location>
    <ligand>
        <name>Zn(2+)</name>
        <dbReference type="ChEBI" id="CHEBI:29105"/>
        <note>catalytic</note>
    </ligand>
</feature>
<feature type="binding site" evidence="1">
    <location>
        <position position="141"/>
    </location>
    <ligand>
        <name>Zn(2+)</name>
        <dbReference type="ChEBI" id="CHEBI:29105"/>
        <note>catalytic</note>
    </ligand>
</feature>
<feature type="binding site" evidence="1">
    <location>
        <position position="147"/>
    </location>
    <ligand>
        <name>Zn(2+)</name>
        <dbReference type="ChEBI" id="CHEBI:29105"/>
        <note>catalytic</note>
    </ligand>
</feature>
<protein>
    <recommendedName>
        <fullName evidence="1">Endoribonuclease YbeY</fullName>
        <ecNumber evidence="1">3.1.-.-</ecNumber>
    </recommendedName>
</protein>
<proteinExistence type="inferred from homology"/>
<evidence type="ECO:0000255" key="1">
    <source>
        <dbReference type="HAMAP-Rule" id="MF_00009"/>
    </source>
</evidence>
<gene>
    <name evidence="1" type="primary">ybeY</name>
    <name type="ordered locus">DET1370</name>
</gene>
<organism>
    <name type="scientific">Dehalococcoides mccartyi (strain ATCC BAA-2266 / KCTC 15142 / 195)</name>
    <name type="common">Dehalococcoides ethenogenes (strain 195)</name>
    <dbReference type="NCBI Taxonomy" id="243164"/>
    <lineage>
        <taxon>Bacteria</taxon>
        <taxon>Bacillati</taxon>
        <taxon>Chloroflexota</taxon>
        <taxon>Dehalococcoidia</taxon>
        <taxon>Dehalococcoidales</taxon>
        <taxon>Dehalococcoidaceae</taxon>
        <taxon>Dehalococcoides</taxon>
    </lineage>
</organism>
<dbReference type="EC" id="3.1.-.-" evidence="1"/>
<dbReference type="EMBL" id="CP000027">
    <property type="protein sequence ID" value="AAW39370.1"/>
    <property type="molecule type" value="Genomic_DNA"/>
</dbReference>
<dbReference type="SMR" id="Q3Z6R8"/>
<dbReference type="FunCoup" id="Q3Z6R8">
    <property type="interactions" value="280"/>
</dbReference>
<dbReference type="STRING" id="243164.DET1370"/>
<dbReference type="KEGG" id="det:DET1370"/>
<dbReference type="eggNOG" id="COG0319">
    <property type="taxonomic scope" value="Bacteria"/>
</dbReference>
<dbReference type="HOGENOM" id="CLU_106710_3_0_0"/>
<dbReference type="InParanoid" id="Q3Z6R8"/>
<dbReference type="Proteomes" id="UP000008289">
    <property type="component" value="Chromosome"/>
</dbReference>
<dbReference type="GO" id="GO:0005737">
    <property type="term" value="C:cytoplasm"/>
    <property type="evidence" value="ECO:0007669"/>
    <property type="project" value="UniProtKB-SubCell"/>
</dbReference>
<dbReference type="GO" id="GO:0004222">
    <property type="term" value="F:metalloendopeptidase activity"/>
    <property type="evidence" value="ECO:0007669"/>
    <property type="project" value="InterPro"/>
</dbReference>
<dbReference type="GO" id="GO:0004521">
    <property type="term" value="F:RNA endonuclease activity"/>
    <property type="evidence" value="ECO:0007669"/>
    <property type="project" value="UniProtKB-UniRule"/>
</dbReference>
<dbReference type="GO" id="GO:0008270">
    <property type="term" value="F:zinc ion binding"/>
    <property type="evidence" value="ECO:0007669"/>
    <property type="project" value="UniProtKB-UniRule"/>
</dbReference>
<dbReference type="GO" id="GO:0006364">
    <property type="term" value="P:rRNA processing"/>
    <property type="evidence" value="ECO:0007669"/>
    <property type="project" value="UniProtKB-UniRule"/>
</dbReference>
<dbReference type="Gene3D" id="3.40.390.30">
    <property type="entry name" value="Metalloproteases ('zincins'), catalytic domain"/>
    <property type="match status" value="1"/>
</dbReference>
<dbReference type="HAMAP" id="MF_00009">
    <property type="entry name" value="Endoribonucl_YbeY"/>
    <property type="match status" value="1"/>
</dbReference>
<dbReference type="InterPro" id="IPR023091">
    <property type="entry name" value="MetalPrtase_cat_dom_sf_prd"/>
</dbReference>
<dbReference type="InterPro" id="IPR002036">
    <property type="entry name" value="YbeY"/>
</dbReference>
<dbReference type="InterPro" id="IPR020549">
    <property type="entry name" value="YbeY_CS"/>
</dbReference>
<dbReference type="NCBIfam" id="TIGR00043">
    <property type="entry name" value="rRNA maturation RNase YbeY"/>
    <property type="match status" value="1"/>
</dbReference>
<dbReference type="PANTHER" id="PTHR46986">
    <property type="entry name" value="ENDORIBONUCLEASE YBEY, CHLOROPLASTIC"/>
    <property type="match status" value="1"/>
</dbReference>
<dbReference type="PANTHER" id="PTHR46986:SF1">
    <property type="entry name" value="ENDORIBONUCLEASE YBEY, CHLOROPLASTIC"/>
    <property type="match status" value="1"/>
</dbReference>
<dbReference type="Pfam" id="PF02130">
    <property type="entry name" value="YbeY"/>
    <property type="match status" value="1"/>
</dbReference>
<dbReference type="SUPFAM" id="SSF55486">
    <property type="entry name" value="Metalloproteases ('zincins'), catalytic domain"/>
    <property type="match status" value="1"/>
</dbReference>
<dbReference type="PROSITE" id="PS01306">
    <property type="entry name" value="UPF0054"/>
    <property type="match status" value="1"/>
</dbReference>